<organism>
    <name type="scientific">Acinetobacter baumannii (strain AB0057)</name>
    <dbReference type="NCBI Taxonomy" id="480119"/>
    <lineage>
        <taxon>Bacteria</taxon>
        <taxon>Pseudomonadati</taxon>
        <taxon>Pseudomonadota</taxon>
        <taxon>Gammaproteobacteria</taxon>
        <taxon>Moraxellales</taxon>
        <taxon>Moraxellaceae</taxon>
        <taxon>Acinetobacter</taxon>
        <taxon>Acinetobacter calcoaceticus/baumannii complex</taxon>
    </lineage>
</organism>
<protein>
    <recommendedName>
        <fullName evidence="1">Probable septum site-determining protein MinC</fullName>
    </recommendedName>
</protein>
<evidence type="ECO:0000255" key="1">
    <source>
        <dbReference type="HAMAP-Rule" id="MF_00267"/>
    </source>
</evidence>
<gene>
    <name evidence="1" type="primary">minC</name>
    <name type="ordered locus">AB57_0929</name>
</gene>
<dbReference type="EMBL" id="CP001182">
    <property type="protein sequence ID" value="ACJ40721.1"/>
    <property type="molecule type" value="Genomic_DNA"/>
</dbReference>
<dbReference type="RefSeq" id="WP_000763673.1">
    <property type="nucleotide sequence ID" value="NC_011586.2"/>
</dbReference>
<dbReference type="SMR" id="B7I7T7"/>
<dbReference type="KEGG" id="abn:AB57_0929"/>
<dbReference type="HOGENOM" id="CLU_067812_0_1_6"/>
<dbReference type="Proteomes" id="UP000007094">
    <property type="component" value="Chromosome"/>
</dbReference>
<dbReference type="GO" id="GO:0000902">
    <property type="term" value="P:cell morphogenesis"/>
    <property type="evidence" value="ECO:0007669"/>
    <property type="project" value="InterPro"/>
</dbReference>
<dbReference type="GO" id="GO:0000917">
    <property type="term" value="P:division septum assembly"/>
    <property type="evidence" value="ECO:0007669"/>
    <property type="project" value="UniProtKB-KW"/>
</dbReference>
<dbReference type="GO" id="GO:0051302">
    <property type="term" value="P:regulation of cell division"/>
    <property type="evidence" value="ECO:0007669"/>
    <property type="project" value="InterPro"/>
</dbReference>
<dbReference type="GO" id="GO:1901891">
    <property type="term" value="P:regulation of cell septum assembly"/>
    <property type="evidence" value="ECO:0007669"/>
    <property type="project" value="InterPro"/>
</dbReference>
<dbReference type="Gene3D" id="2.160.20.70">
    <property type="match status" value="1"/>
</dbReference>
<dbReference type="Gene3D" id="3.30.70.260">
    <property type="match status" value="1"/>
</dbReference>
<dbReference type="HAMAP" id="MF_00267">
    <property type="entry name" value="MinC"/>
    <property type="match status" value="1"/>
</dbReference>
<dbReference type="InterPro" id="IPR016098">
    <property type="entry name" value="CAP/MinC_C"/>
</dbReference>
<dbReference type="InterPro" id="IPR013033">
    <property type="entry name" value="MinC"/>
</dbReference>
<dbReference type="InterPro" id="IPR036145">
    <property type="entry name" value="MinC_C_sf"/>
</dbReference>
<dbReference type="InterPro" id="IPR007874">
    <property type="entry name" value="MinC_N"/>
</dbReference>
<dbReference type="InterPro" id="IPR005526">
    <property type="entry name" value="Septum_form_inhib_MinC_C"/>
</dbReference>
<dbReference type="NCBIfam" id="TIGR01222">
    <property type="entry name" value="minC"/>
    <property type="match status" value="1"/>
</dbReference>
<dbReference type="PANTHER" id="PTHR34108">
    <property type="entry name" value="SEPTUM SITE-DETERMINING PROTEIN MINC"/>
    <property type="match status" value="1"/>
</dbReference>
<dbReference type="PANTHER" id="PTHR34108:SF1">
    <property type="entry name" value="SEPTUM SITE-DETERMINING PROTEIN MINC"/>
    <property type="match status" value="1"/>
</dbReference>
<dbReference type="Pfam" id="PF03775">
    <property type="entry name" value="MinC_C"/>
    <property type="match status" value="1"/>
</dbReference>
<dbReference type="Pfam" id="PF05209">
    <property type="entry name" value="MinC_N"/>
    <property type="match status" value="1"/>
</dbReference>
<dbReference type="SUPFAM" id="SSF63848">
    <property type="entry name" value="Cell-division inhibitor MinC, C-terminal domain"/>
    <property type="match status" value="1"/>
</dbReference>
<sequence>MADIRITGRMVNFSRITFDTNDHDVIRQQLSNILNEGSYQGTVVIIDSTVEQELIALIQLLVSLGLQPMAVIDGILGDEARAIQFPVLPADQPLQRIKPTAEQVAIVEKPSSAQASVETKKPLNNNAVAHITSYHDEILRTGQSLVQDQGDIILKAAMNSGSEVIASGNIHIYGTVRGRVIAGAGGHAAARIFCQSLEAELVSIAGTYCVADDIPKHVVKKPVHIYLNEKQELEFEALEL</sequence>
<keyword id="KW-0131">Cell cycle</keyword>
<keyword id="KW-0132">Cell division</keyword>
<keyword id="KW-0717">Septation</keyword>
<proteinExistence type="inferred from homology"/>
<name>MINC_ACIB5</name>
<accession>B7I7T7</accession>
<feature type="chain" id="PRO_1000191224" description="Probable septum site-determining protein MinC">
    <location>
        <begin position="1"/>
        <end position="240"/>
    </location>
</feature>
<reference key="1">
    <citation type="journal article" date="2008" name="J. Bacteriol.">
        <title>Comparative genome sequence analysis of multidrug-resistant Acinetobacter baumannii.</title>
        <authorList>
            <person name="Adams M.D."/>
            <person name="Goglin K."/>
            <person name="Molyneaux N."/>
            <person name="Hujer K.M."/>
            <person name="Lavender H."/>
            <person name="Jamison J.J."/>
            <person name="MacDonald I.J."/>
            <person name="Martin K.M."/>
            <person name="Russo T."/>
            <person name="Campagnari A.A."/>
            <person name="Hujer A.M."/>
            <person name="Bonomo R.A."/>
            <person name="Gill S.R."/>
        </authorList>
    </citation>
    <scope>NUCLEOTIDE SEQUENCE [LARGE SCALE GENOMIC DNA]</scope>
    <source>
        <strain>AB0057</strain>
    </source>
</reference>
<comment type="function">
    <text evidence="1">Cell division inhibitor that blocks the formation of polar Z ring septums. Rapidly oscillates between the poles of the cell to destabilize FtsZ filaments that have formed before they mature into polar Z rings. Prevents FtsZ polymerization.</text>
</comment>
<comment type="subunit">
    <text evidence="1">Interacts with MinD and FtsZ.</text>
</comment>
<comment type="similarity">
    <text evidence="1">Belongs to the MinC family.</text>
</comment>